<proteinExistence type="inferred from homology"/>
<gene>
    <name type="primary">pgpB</name>
    <name type="ordered locus">Z2529</name>
    <name type="ordered locus">ECs1851</name>
</gene>
<keyword id="KW-0997">Cell inner membrane</keyword>
<keyword id="KW-1003">Cell membrane</keyword>
<keyword id="KW-0998">Cell outer membrane</keyword>
<keyword id="KW-0378">Hydrolase</keyword>
<keyword id="KW-0442">Lipid degradation</keyword>
<keyword id="KW-0443">Lipid metabolism</keyword>
<keyword id="KW-0472">Membrane</keyword>
<keyword id="KW-0595">Phospholipid degradation</keyword>
<keyword id="KW-1208">Phospholipid metabolism</keyword>
<keyword id="KW-1185">Reference proteome</keyword>
<keyword id="KW-0812">Transmembrane</keyword>
<keyword id="KW-1133">Transmembrane helix</keyword>
<organism>
    <name type="scientific">Escherichia coli O157:H7</name>
    <dbReference type="NCBI Taxonomy" id="83334"/>
    <lineage>
        <taxon>Bacteria</taxon>
        <taxon>Pseudomonadati</taxon>
        <taxon>Pseudomonadota</taxon>
        <taxon>Gammaproteobacteria</taxon>
        <taxon>Enterobacterales</taxon>
        <taxon>Enterobacteriaceae</taxon>
        <taxon>Escherichia</taxon>
    </lineage>
</organism>
<accession>P0A925</accession>
<accession>P18201</accession>
<protein>
    <recommendedName>
        <fullName>Phosphatidylglycerophosphatase B</fullName>
        <ecNumber>3.1.3.27</ecNumber>
    </recommendedName>
    <alternativeName>
        <fullName>Diacylglycerol pyrophosphate phosphatase</fullName>
        <shortName>DGPP phosphatase</shortName>
        <ecNumber>3.6.1.75</ecNumber>
    </alternativeName>
    <alternativeName>
        <fullName>Phosphatidate phosphatase</fullName>
        <ecNumber>3.1.3.4</ecNumber>
    </alternativeName>
    <alternativeName>
        <fullName>Undecaprenyl pyrophosphate phosphatase</fullName>
        <ecNumber>3.6.1.27</ecNumber>
    </alternativeName>
    <alternativeName>
        <fullName>Undecaprenyl-diphosphatase</fullName>
    </alternativeName>
</protein>
<feature type="initiator methionine" description="Removed" evidence="2">
    <location>
        <position position="1"/>
    </location>
</feature>
<feature type="chain" id="PRO_0000058361" description="Phosphatidylglycerophosphatase B">
    <location>
        <begin position="2"/>
        <end position="254"/>
    </location>
</feature>
<feature type="transmembrane region" description="Helical" evidence="2">
    <location>
        <begin position="2"/>
        <end position="24"/>
    </location>
</feature>
<feature type="topological domain" description="Periplasmic" evidence="2">
    <location>
        <begin position="25"/>
        <end position="54"/>
    </location>
</feature>
<feature type="transmembrane region" description="Helical" evidence="2">
    <location>
        <begin position="55"/>
        <end position="66"/>
    </location>
</feature>
<feature type="topological domain" description="Cytoplasmic" evidence="2">
    <location>
        <begin position="67"/>
        <end position="71"/>
    </location>
</feature>
<feature type="transmembrane region" description="Helical" evidence="2">
    <location>
        <begin position="72"/>
        <end position="94"/>
    </location>
</feature>
<feature type="topological domain" description="Periplasmic" evidence="2">
    <location>
        <begin position="95"/>
        <end position="161"/>
    </location>
</feature>
<feature type="transmembrane region" description="Helical" evidence="2">
    <location>
        <begin position="162"/>
        <end position="176"/>
    </location>
</feature>
<feature type="topological domain" description="Cytoplasmic" evidence="2">
    <location>
        <begin position="177"/>
        <end position="182"/>
    </location>
</feature>
<feature type="transmembrane region" description="Helical" evidence="2">
    <location>
        <begin position="183"/>
        <end position="202"/>
    </location>
</feature>
<feature type="topological domain" description="Periplasmic" evidence="2">
    <location>
        <begin position="203"/>
        <end position="208"/>
    </location>
</feature>
<feature type="transmembrane region" description="Helical" evidence="2">
    <location>
        <begin position="209"/>
        <end position="232"/>
    </location>
</feature>
<feature type="topological domain" description="Cytoplasmic" evidence="2">
    <location>
        <begin position="233"/>
        <end position="254"/>
    </location>
</feature>
<feature type="region of interest" description="Phosphatase sequence motif I" evidence="3">
    <location>
        <begin position="97"/>
        <end position="105"/>
    </location>
</feature>
<feature type="region of interest" description="Phosphatase sequence motif II" evidence="3">
    <location>
        <begin position="160"/>
        <end position="163"/>
    </location>
</feature>
<feature type="region of interest" description="Phosphatase sequence motif III" evidence="3">
    <location>
        <begin position="200"/>
        <end position="211"/>
    </location>
</feature>
<feature type="active site" description="Proton donor; for a subset of substrates" evidence="2">
    <location>
        <position position="163"/>
    </location>
</feature>
<feature type="active site" description="Nucleophile" evidence="2">
    <location>
        <position position="207"/>
    </location>
</feature>
<feature type="site" description="Stabilizes the active site histidine for nucleophilic attack" evidence="2">
    <location>
        <position position="211"/>
    </location>
</feature>
<reference key="1">
    <citation type="journal article" date="2001" name="Nature">
        <title>Genome sequence of enterohaemorrhagic Escherichia coli O157:H7.</title>
        <authorList>
            <person name="Perna N.T."/>
            <person name="Plunkett G. III"/>
            <person name="Burland V."/>
            <person name="Mau B."/>
            <person name="Glasner J.D."/>
            <person name="Rose D.J."/>
            <person name="Mayhew G.F."/>
            <person name="Evans P.S."/>
            <person name="Gregor J."/>
            <person name="Kirkpatrick H.A."/>
            <person name="Posfai G."/>
            <person name="Hackett J."/>
            <person name="Klink S."/>
            <person name="Boutin A."/>
            <person name="Shao Y."/>
            <person name="Miller L."/>
            <person name="Grotbeck E.J."/>
            <person name="Davis N.W."/>
            <person name="Lim A."/>
            <person name="Dimalanta E.T."/>
            <person name="Potamousis K."/>
            <person name="Apodaca J."/>
            <person name="Anantharaman T.S."/>
            <person name="Lin J."/>
            <person name="Yen G."/>
            <person name="Schwartz D.C."/>
            <person name="Welch R.A."/>
            <person name="Blattner F.R."/>
        </authorList>
    </citation>
    <scope>NUCLEOTIDE SEQUENCE [LARGE SCALE GENOMIC DNA]</scope>
    <source>
        <strain>O157:H7 / EDL933 / ATCC 700927 / EHEC</strain>
    </source>
</reference>
<reference key="2">
    <citation type="journal article" date="2001" name="DNA Res.">
        <title>Complete genome sequence of enterohemorrhagic Escherichia coli O157:H7 and genomic comparison with a laboratory strain K-12.</title>
        <authorList>
            <person name="Hayashi T."/>
            <person name="Makino K."/>
            <person name="Ohnishi M."/>
            <person name="Kurokawa K."/>
            <person name="Ishii K."/>
            <person name="Yokoyama K."/>
            <person name="Han C.-G."/>
            <person name="Ohtsubo E."/>
            <person name="Nakayama K."/>
            <person name="Murata T."/>
            <person name="Tanaka M."/>
            <person name="Tobe T."/>
            <person name="Iida T."/>
            <person name="Takami H."/>
            <person name="Honda T."/>
            <person name="Sasakawa C."/>
            <person name="Ogasawara N."/>
            <person name="Yasunaga T."/>
            <person name="Kuhara S."/>
            <person name="Shiba T."/>
            <person name="Hattori M."/>
            <person name="Shinagawa H."/>
        </authorList>
    </citation>
    <scope>NUCLEOTIDE SEQUENCE [LARGE SCALE GENOMIC DNA]</scope>
    <source>
        <strain>O157:H7 / Sakai / RIMD 0509952 / EHEC</strain>
    </source>
</reference>
<comment type="function">
    <text evidence="1">Catalyzes the dephosphorylation of diacylglycerol diphosphate (DGPP) to phosphatidate (PA) and the subsequent dephosphorylation of PA to diacylglycerol (DAG). Also has undecaprenyl pyrophosphate phosphatase activity, required for the biosynthesis of the lipid carrier undecaprenyl phosphate. Can also use lysophosphatidic acid (LPA) and phosphatidylglycerophosphate as substrates. The pattern of activities varies according to subcellular location, PGP phosphatase activity is higher in the cytoplasmic membrane, whereas PA and LPA phosphatase activities are higher in the outer membrane. Activity is independent of a divalent cation ion and insensitive to inhibition by N-ethylmaleimide (By similarity).</text>
</comment>
<comment type="catalytic activity">
    <reaction>
        <text>a 1,2-diacyl-sn-glycero-3-phospho-(1'-sn-glycero-3'-phosphate) + H2O = a 1,2-diacyl-sn-glycero-3-phospho-(1'-sn-glycerol) + phosphate</text>
        <dbReference type="Rhea" id="RHEA:33751"/>
        <dbReference type="ChEBI" id="CHEBI:15377"/>
        <dbReference type="ChEBI" id="CHEBI:43474"/>
        <dbReference type="ChEBI" id="CHEBI:60110"/>
        <dbReference type="ChEBI" id="CHEBI:64716"/>
        <dbReference type="EC" id="3.1.3.27"/>
    </reaction>
</comment>
<comment type="catalytic activity">
    <reaction>
        <text>a 1,2-diacyl-sn-glycerol 3-diphosphate + H2O = a 1,2-diacyl-sn-glycero-3-phosphate + phosphate + H(+)</text>
        <dbReference type="Rhea" id="RHEA:27449"/>
        <dbReference type="ChEBI" id="CHEBI:15377"/>
        <dbReference type="ChEBI" id="CHEBI:15378"/>
        <dbReference type="ChEBI" id="CHEBI:43474"/>
        <dbReference type="ChEBI" id="CHEBI:58608"/>
        <dbReference type="ChEBI" id="CHEBI:59996"/>
        <dbReference type="EC" id="3.6.1.75"/>
    </reaction>
</comment>
<comment type="catalytic activity">
    <reaction>
        <text>a 1,2-diacyl-sn-glycero-3-phosphate + H2O = a 1,2-diacyl-sn-glycerol + phosphate</text>
        <dbReference type="Rhea" id="RHEA:27429"/>
        <dbReference type="ChEBI" id="CHEBI:15377"/>
        <dbReference type="ChEBI" id="CHEBI:17815"/>
        <dbReference type="ChEBI" id="CHEBI:43474"/>
        <dbReference type="ChEBI" id="CHEBI:58608"/>
        <dbReference type="EC" id="3.1.3.4"/>
    </reaction>
</comment>
<comment type="catalytic activity">
    <reaction>
        <text>di-trans,octa-cis-undecaprenyl diphosphate + H2O = di-trans,octa-cis-undecaprenyl phosphate + phosphate + H(+)</text>
        <dbReference type="Rhea" id="RHEA:28094"/>
        <dbReference type="ChEBI" id="CHEBI:15377"/>
        <dbReference type="ChEBI" id="CHEBI:15378"/>
        <dbReference type="ChEBI" id="CHEBI:43474"/>
        <dbReference type="ChEBI" id="CHEBI:58405"/>
        <dbReference type="ChEBI" id="CHEBI:60392"/>
        <dbReference type="EC" id="3.6.1.27"/>
    </reaction>
</comment>
<comment type="pathway">
    <text>Phospholipid metabolism; phosphatidylglycerol biosynthesis; phosphatidylglycerol from CDP-diacylglycerol: step 2/2.</text>
</comment>
<comment type="subcellular location">
    <subcellularLocation>
        <location evidence="1">Cell inner membrane</location>
        <topology evidence="1">Multi-pass membrane protein</topology>
    </subcellularLocation>
    <subcellularLocation>
        <location evidence="1">Cell outer membrane</location>
        <topology evidence="1">Multi-pass membrane protein</topology>
    </subcellularLocation>
</comment>
<comment type="PTM">
    <text evidence="1">The N-terminus is blocked.</text>
</comment>
<comment type="similarity">
    <text evidence="3">Belongs to the PA-phosphatase related phosphoesterase family.</text>
</comment>
<name>PGPB_ECO57</name>
<dbReference type="EC" id="3.1.3.27"/>
<dbReference type="EC" id="3.6.1.75"/>
<dbReference type="EC" id="3.1.3.4"/>
<dbReference type="EC" id="3.6.1.27"/>
<dbReference type="EMBL" id="AE005174">
    <property type="protein sequence ID" value="AAG56535.1"/>
    <property type="molecule type" value="Genomic_DNA"/>
</dbReference>
<dbReference type="EMBL" id="BA000007">
    <property type="protein sequence ID" value="BAB35274.1"/>
    <property type="molecule type" value="Genomic_DNA"/>
</dbReference>
<dbReference type="PIR" id="C85759">
    <property type="entry name" value="C85759"/>
</dbReference>
<dbReference type="PIR" id="C90860">
    <property type="entry name" value="C90860"/>
</dbReference>
<dbReference type="RefSeq" id="NP_309878.1">
    <property type="nucleotide sequence ID" value="NC_002695.1"/>
</dbReference>
<dbReference type="RefSeq" id="WP_001256538.1">
    <property type="nucleotide sequence ID" value="NZ_VOAI01000015.1"/>
</dbReference>
<dbReference type="SMR" id="P0A925"/>
<dbReference type="STRING" id="155864.Z2529"/>
<dbReference type="GeneID" id="75203391"/>
<dbReference type="GeneID" id="912812"/>
<dbReference type="KEGG" id="ece:Z2529"/>
<dbReference type="KEGG" id="ecs:ECs_1851"/>
<dbReference type="PATRIC" id="fig|386585.9.peg.1950"/>
<dbReference type="eggNOG" id="COG0671">
    <property type="taxonomic scope" value="Bacteria"/>
</dbReference>
<dbReference type="HOGENOM" id="CLU_083863_0_0_6"/>
<dbReference type="OMA" id="AWFLWCL"/>
<dbReference type="UniPathway" id="UPA00084">
    <property type="reaction ID" value="UER00504"/>
</dbReference>
<dbReference type="Proteomes" id="UP000000558">
    <property type="component" value="Chromosome"/>
</dbReference>
<dbReference type="Proteomes" id="UP000002519">
    <property type="component" value="Chromosome"/>
</dbReference>
<dbReference type="GO" id="GO:0009279">
    <property type="term" value="C:cell outer membrane"/>
    <property type="evidence" value="ECO:0007669"/>
    <property type="project" value="UniProtKB-SubCell"/>
</dbReference>
<dbReference type="GO" id="GO:0005886">
    <property type="term" value="C:plasma membrane"/>
    <property type="evidence" value="ECO:0007669"/>
    <property type="project" value="UniProtKB-SubCell"/>
</dbReference>
<dbReference type="GO" id="GO:0000810">
    <property type="term" value="F:diacylglycerol diphosphate phosphatase activity"/>
    <property type="evidence" value="ECO:0007669"/>
    <property type="project" value="RHEA"/>
</dbReference>
<dbReference type="GO" id="GO:0008195">
    <property type="term" value="F:phosphatidate phosphatase activity"/>
    <property type="evidence" value="ECO:0007669"/>
    <property type="project" value="UniProtKB-EC"/>
</dbReference>
<dbReference type="GO" id="GO:0008962">
    <property type="term" value="F:phosphatidylglycerophosphatase activity"/>
    <property type="evidence" value="ECO:0007669"/>
    <property type="project" value="UniProtKB-EC"/>
</dbReference>
<dbReference type="GO" id="GO:0050380">
    <property type="term" value="F:undecaprenyl-diphosphatase activity"/>
    <property type="evidence" value="ECO:0007669"/>
    <property type="project" value="UniProtKB-EC"/>
</dbReference>
<dbReference type="GO" id="GO:0006655">
    <property type="term" value="P:phosphatidylglycerol biosynthetic process"/>
    <property type="evidence" value="ECO:0007669"/>
    <property type="project" value="UniProtKB-UniPathway"/>
</dbReference>
<dbReference type="GO" id="GO:0009395">
    <property type="term" value="P:phospholipid catabolic process"/>
    <property type="evidence" value="ECO:0007669"/>
    <property type="project" value="UniProtKB-KW"/>
</dbReference>
<dbReference type="CDD" id="cd01610">
    <property type="entry name" value="PAP2_like"/>
    <property type="match status" value="1"/>
</dbReference>
<dbReference type="FunFam" id="1.20.144.10:FF:000008">
    <property type="entry name" value="Phosphatidylglycerophosphatase B"/>
    <property type="match status" value="1"/>
</dbReference>
<dbReference type="Gene3D" id="1.20.144.10">
    <property type="entry name" value="Phosphatidic acid phosphatase type 2/haloperoxidase"/>
    <property type="match status" value="1"/>
</dbReference>
<dbReference type="InterPro" id="IPR036938">
    <property type="entry name" value="P_Acid_Pase_2/haloperoxi_sf"/>
</dbReference>
<dbReference type="InterPro" id="IPR000326">
    <property type="entry name" value="P_Acid_Pase_2/haloperoxidase"/>
</dbReference>
<dbReference type="NCBIfam" id="NF007975">
    <property type="entry name" value="PRK10699.1"/>
    <property type="match status" value="1"/>
</dbReference>
<dbReference type="PANTHER" id="PTHR14969:SF54">
    <property type="entry name" value="PHOSPHATIDYLGLYCEROPHOSPHATASE B"/>
    <property type="match status" value="1"/>
</dbReference>
<dbReference type="PANTHER" id="PTHR14969">
    <property type="entry name" value="SPHINGOSINE-1-PHOSPHATE PHOSPHOHYDROLASE"/>
    <property type="match status" value="1"/>
</dbReference>
<dbReference type="Pfam" id="PF01569">
    <property type="entry name" value="PAP2"/>
    <property type="match status" value="1"/>
</dbReference>
<dbReference type="SMART" id="SM00014">
    <property type="entry name" value="acidPPc"/>
    <property type="match status" value="1"/>
</dbReference>
<dbReference type="SUPFAM" id="SSF48317">
    <property type="entry name" value="Acid phosphatase/Vanadium-dependent haloperoxidase"/>
    <property type="match status" value="1"/>
</dbReference>
<sequence>MRSIARRTAVGAALLLVMPVAVWISGWRWQPGEQSWLLKAAFWVTETVTQPWGVITHLILFGWFLWCLRFRIKAAFVLFAILAAAILVGQGVKSWIKDKVQEPRPFVIWLEKTHHIPVDEFYTLKRAERGNLVKEQLAEEKNIPQYLRSHWQKETGFAFPSGHTMFAASWALLAVGLLWPRRRTLTIAILLVWATGVMGSRLLLGMHWPRDLVVATLISWALVAVATWLAQRICGPLTPPAEENREIAQREQES</sequence>
<evidence type="ECO:0000250" key="1"/>
<evidence type="ECO:0000250" key="2">
    <source>
        <dbReference type="UniProtKB" id="P0A924"/>
    </source>
</evidence>
<evidence type="ECO:0000305" key="3"/>